<evidence type="ECO:0000255" key="1"/>
<evidence type="ECO:0000256" key="2">
    <source>
        <dbReference type="SAM" id="MobiDB-lite"/>
    </source>
</evidence>
<evidence type="ECO:0000269" key="3">
    <source>
    </source>
</evidence>
<evidence type="ECO:0000305" key="4"/>
<feature type="chain" id="PRO_0000407734" description="Cell number regulator 6">
    <location>
        <begin position="1"/>
        <end position="239"/>
    </location>
</feature>
<feature type="transmembrane region" description="Helical" evidence="1">
    <location>
        <begin position="107"/>
        <end position="127"/>
    </location>
</feature>
<feature type="transmembrane region" description="Helical" evidence="1">
    <location>
        <begin position="136"/>
        <end position="156"/>
    </location>
</feature>
<feature type="region of interest" description="Disordered" evidence="2">
    <location>
        <begin position="1"/>
        <end position="33"/>
    </location>
</feature>
<feature type="compositionally biased region" description="Polar residues" evidence="2">
    <location>
        <begin position="1"/>
        <end position="10"/>
    </location>
</feature>
<feature type="compositionally biased region" description="Basic and acidic residues" evidence="2">
    <location>
        <begin position="16"/>
        <end position="29"/>
    </location>
</feature>
<name>CNR6_MAIZE</name>
<dbReference type="EMBL" id="HM008658">
    <property type="protein sequence ID" value="ADI48420.1"/>
    <property type="molecule type" value="mRNA"/>
</dbReference>
<dbReference type="EMBL" id="EU951790">
    <property type="protein sequence ID" value="ACG23908.1"/>
    <property type="molecule type" value="mRNA"/>
</dbReference>
<dbReference type="EMBL" id="BT066232">
    <property type="protein sequence ID" value="ACN32108.1"/>
    <property type="molecule type" value="mRNA"/>
</dbReference>
<dbReference type="RefSeq" id="NP_001146843.1">
    <property type="nucleotide sequence ID" value="NM_001153371.1"/>
</dbReference>
<dbReference type="FunCoup" id="B6SGC5">
    <property type="interactions" value="594"/>
</dbReference>
<dbReference type="STRING" id="4577.B6SGC5"/>
<dbReference type="PaxDb" id="4577-GRMZM2G168257_P01"/>
<dbReference type="GeneID" id="100280451"/>
<dbReference type="KEGG" id="zma:100280451"/>
<dbReference type="eggNOG" id="ENOG502QS3R">
    <property type="taxonomic scope" value="Eukaryota"/>
</dbReference>
<dbReference type="HOGENOM" id="CLU_083147_0_1_1"/>
<dbReference type="InParanoid" id="B6SGC5"/>
<dbReference type="OMA" id="RRCNECG"/>
<dbReference type="OrthoDB" id="1045822at2759"/>
<dbReference type="Proteomes" id="UP000007305">
    <property type="component" value="Unplaced"/>
</dbReference>
<dbReference type="ExpressionAtlas" id="B6SGC5">
    <property type="expression patterns" value="baseline and differential"/>
</dbReference>
<dbReference type="GO" id="GO:0016020">
    <property type="term" value="C:membrane"/>
    <property type="evidence" value="ECO:0007669"/>
    <property type="project" value="UniProtKB-SubCell"/>
</dbReference>
<dbReference type="InterPro" id="IPR006461">
    <property type="entry name" value="PLAC_motif_containing"/>
</dbReference>
<dbReference type="NCBIfam" id="TIGR01571">
    <property type="entry name" value="A_thal_Cys_rich"/>
    <property type="match status" value="1"/>
</dbReference>
<dbReference type="PANTHER" id="PTHR15907">
    <property type="entry name" value="DUF614 FAMILY PROTEIN-RELATED"/>
    <property type="match status" value="1"/>
</dbReference>
<dbReference type="Pfam" id="PF04749">
    <property type="entry name" value="PLAC8"/>
    <property type="match status" value="1"/>
</dbReference>
<organism>
    <name type="scientific">Zea mays</name>
    <name type="common">Maize</name>
    <dbReference type="NCBI Taxonomy" id="4577"/>
    <lineage>
        <taxon>Eukaryota</taxon>
        <taxon>Viridiplantae</taxon>
        <taxon>Streptophyta</taxon>
        <taxon>Embryophyta</taxon>
        <taxon>Tracheophyta</taxon>
        <taxon>Spermatophyta</taxon>
        <taxon>Magnoliopsida</taxon>
        <taxon>Liliopsida</taxon>
        <taxon>Poales</taxon>
        <taxon>Poaceae</taxon>
        <taxon>PACMAD clade</taxon>
        <taxon>Panicoideae</taxon>
        <taxon>Andropogonodae</taxon>
        <taxon>Andropogoneae</taxon>
        <taxon>Tripsacinae</taxon>
        <taxon>Zea</taxon>
    </lineage>
</organism>
<sequence length="239" mass="26680">MAEDATSSHPSRYVKLTKDQDAPAEDIRPGELNQPVHVPQLEGRRCSECGQVLPESYEPPADEPWTTGIFGCTDDPETCRTGLFCPCVLFGRNVEAVREDIPWTTPCVCHAVFVEGGITLAILTAIFHGVDPRTSFLIGEGLVFSWWLCATYTGIFRQGLQRKYHLKNSPCDPCMVHCCLHWCANCQEHRERTGRLAENNAVPMTVVNPPPVQEMSMLEEVEEKGAEKSEHDDVEVIPL</sequence>
<gene>
    <name type="primary">CNR6</name>
</gene>
<protein>
    <recommendedName>
        <fullName>Cell number regulator 6</fullName>
    </recommendedName>
    <alternativeName>
        <fullName>ZmCNR06</fullName>
    </alternativeName>
</protein>
<reference key="1">
    <citation type="journal article" date="2010" name="Plant Cell">
        <title>Cell Number Regulator1 affects plant and organ size in maize: implications for crop yield enhancement and heterosis.</title>
        <authorList>
            <person name="Guo M."/>
            <person name="Rupe M.A."/>
            <person name="Dieter J.A."/>
            <person name="Zou J."/>
            <person name="Spielbauer D."/>
            <person name="Duncan K.E."/>
            <person name="Howard R.J."/>
            <person name="Hou Z."/>
            <person name="Simmons C.R."/>
        </authorList>
    </citation>
    <scope>NUCLEOTIDE SEQUENCE [MRNA]</scope>
    <scope>TISSUE SPECIFICITY</scope>
    <scope>GENE FAMILY</scope>
    <scope>NOMENCLATURE</scope>
    <source>
        <strain>cv. B73</strain>
    </source>
</reference>
<reference key="2">
    <citation type="journal article" date="2009" name="Plant Mol. Biol.">
        <title>Insights into corn genes derived from large-scale cDNA sequencing.</title>
        <authorList>
            <person name="Alexandrov N.N."/>
            <person name="Brover V.V."/>
            <person name="Freidin S."/>
            <person name="Troukhan M.E."/>
            <person name="Tatarinova T.V."/>
            <person name="Zhang H."/>
            <person name="Swaller T.J."/>
            <person name="Lu Y.-P."/>
            <person name="Bouck J."/>
            <person name="Flavell R.B."/>
            <person name="Feldmann K.A."/>
        </authorList>
    </citation>
    <scope>NUCLEOTIDE SEQUENCE [LARGE SCALE MRNA]</scope>
</reference>
<reference key="3">
    <citation type="submission" date="2009-02" db="EMBL/GenBank/DDBJ databases">
        <title>Maize full-length cDNA project.</title>
        <authorList>
            <person name="Yu Y."/>
            <person name="Currie J."/>
            <person name="Lomeli R."/>
            <person name="Angelova A."/>
            <person name="Collura K."/>
            <person name="Wissotski M."/>
            <person name="Campos D."/>
            <person name="Kudrna D."/>
            <person name="Golser W."/>
            <person name="Ashely E."/>
            <person name="Haller K."/>
            <person name="Descour A."/>
            <person name="Fernandes J."/>
            <person name="Soderlund C."/>
            <person name="Walbot V."/>
        </authorList>
    </citation>
    <scope>NUCLEOTIDE SEQUENCE [LARGE SCALE MRNA]</scope>
    <source>
        <strain>cv. B73</strain>
    </source>
</reference>
<comment type="subcellular location">
    <subcellularLocation>
        <location evidence="4">Membrane</location>
        <topology evidence="4">Multi-pass membrane protein</topology>
    </subcellularLocation>
</comment>
<comment type="tissue specificity">
    <text evidence="3">Expressed in roots, leaves, stalks, apical meristems, immature ears, endosperm, pericarp and tassel spikelets.</text>
</comment>
<comment type="similarity">
    <text evidence="4">Belongs to the cornifelin family.</text>
</comment>
<proteinExistence type="evidence at transcript level"/>
<keyword id="KW-0472">Membrane</keyword>
<keyword id="KW-1185">Reference proteome</keyword>
<keyword id="KW-0812">Transmembrane</keyword>
<keyword id="KW-1133">Transmembrane helix</keyword>
<accession>B6SGC5</accession>